<evidence type="ECO:0000255" key="1">
    <source>
        <dbReference type="HAMAP-Rule" id="MF_01569"/>
    </source>
</evidence>
<organism>
    <name type="scientific">Thermoanaerobacter sp. (strain X514)</name>
    <dbReference type="NCBI Taxonomy" id="399726"/>
    <lineage>
        <taxon>Bacteria</taxon>
        <taxon>Bacillati</taxon>
        <taxon>Bacillota</taxon>
        <taxon>Clostridia</taxon>
        <taxon>Thermoanaerobacterales</taxon>
        <taxon>Thermoanaerobacteraceae</taxon>
        <taxon>Thermoanaerobacter</taxon>
    </lineage>
</organism>
<accession>B0K5F2</accession>
<name>SYP_THEPX</name>
<reference key="1">
    <citation type="submission" date="2008-01" db="EMBL/GenBank/DDBJ databases">
        <title>Complete sequence of Thermoanaerobacter sp. X514.</title>
        <authorList>
            <consortium name="US DOE Joint Genome Institute"/>
            <person name="Copeland A."/>
            <person name="Lucas S."/>
            <person name="Lapidus A."/>
            <person name="Barry K."/>
            <person name="Glavina del Rio T."/>
            <person name="Dalin E."/>
            <person name="Tice H."/>
            <person name="Pitluck S."/>
            <person name="Bruce D."/>
            <person name="Goodwin L."/>
            <person name="Saunders E."/>
            <person name="Brettin T."/>
            <person name="Detter J.C."/>
            <person name="Han C."/>
            <person name="Schmutz J."/>
            <person name="Larimer F."/>
            <person name="Land M."/>
            <person name="Hauser L."/>
            <person name="Kyrpides N."/>
            <person name="Kim E."/>
            <person name="Hemme C."/>
            <person name="Fields M.W."/>
            <person name="He Z."/>
            <person name="Zhou J."/>
            <person name="Richardson P."/>
        </authorList>
    </citation>
    <scope>NUCLEOTIDE SEQUENCE [LARGE SCALE GENOMIC DNA]</scope>
    <source>
        <strain>X514</strain>
    </source>
</reference>
<keyword id="KW-0030">Aminoacyl-tRNA synthetase</keyword>
<keyword id="KW-0067">ATP-binding</keyword>
<keyword id="KW-0963">Cytoplasm</keyword>
<keyword id="KW-0436">Ligase</keyword>
<keyword id="KW-0547">Nucleotide-binding</keyword>
<keyword id="KW-0648">Protein biosynthesis</keyword>
<sequence>MRLSQLLVPTLREIPAEAEIPSHILMLKAALMRKLASGVYIYLPLGQRVLRKVEQIVREEMDRAGSQEVLMSALIPAELLKESGRWDVFGPEMFKLKDRNERDFCLGPTHEEVFTDLIRNEVKSYRQLPLILYQIQTKFRDERRPRFGVMRSREFIMKDAYSFDVDWEGLDKSFNKMYEAYCRIFDRCGLKYLVVEADSGAMGGKDSKEFMVISSIGEAVIAYCDNCGYAANEEKAECLINQEIVEEMLPKEEVYTPNVRTIEELVNFLGITPNKFVKTLIYKAKDNVVAALVRGDRDLNETKLLNILGIREEELELADASIVEKVTGAKVGFAGPIGLKGEVMIIVDNEIPQMRNFIVGANETDYHIKNVNYGRDFKADVVADIKNVIEGDKCPRCGSPLKIDRGIEVGHIFKLGTKYSDALGAKYVDEEGNEKPIIMGCYGIGINRTVAAIIEQHHDEKGIIWPMSVAPYHVIIVPVNVSNEAQNRVAEDIYAALQKEGIEVLIDDRDLRAGVKFNDADLLGIPIRITVGKKVDDGIVEIKLRENEEAEEVKISDVVEKVKNIIKEKM</sequence>
<gene>
    <name evidence="1" type="primary">proS</name>
    <name type="ordered locus">Teth514_0842</name>
</gene>
<proteinExistence type="inferred from homology"/>
<protein>
    <recommendedName>
        <fullName evidence="1">Proline--tRNA ligase</fullName>
        <ecNumber evidence="1">6.1.1.15</ecNumber>
    </recommendedName>
    <alternativeName>
        <fullName evidence="1">Prolyl-tRNA synthetase</fullName>
        <shortName evidence="1">ProRS</shortName>
    </alternativeName>
</protein>
<comment type="function">
    <text evidence="1">Catalyzes the attachment of proline to tRNA(Pro) in a two-step reaction: proline is first activated by ATP to form Pro-AMP and then transferred to the acceptor end of tRNA(Pro). As ProRS can inadvertently accommodate and process non-cognate amino acids such as alanine and cysteine, to avoid such errors it has two additional distinct editing activities against alanine. One activity is designated as 'pretransfer' editing and involves the tRNA(Pro)-independent hydrolysis of activated Ala-AMP. The other activity is designated 'posttransfer' editing and involves deacylation of mischarged Ala-tRNA(Pro). The misacylated Cys-tRNA(Pro) is not edited by ProRS.</text>
</comment>
<comment type="catalytic activity">
    <reaction evidence="1">
        <text>tRNA(Pro) + L-proline + ATP = L-prolyl-tRNA(Pro) + AMP + diphosphate</text>
        <dbReference type="Rhea" id="RHEA:14305"/>
        <dbReference type="Rhea" id="RHEA-COMP:9700"/>
        <dbReference type="Rhea" id="RHEA-COMP:9702"/>
        <dbReference type="ChEBI" id="CHEBI:30616"/>
        <dbReference type="ChEBI" id="CHEBI:33019"/>
        <dbReference type="ChEBI" id="CHEBI:60039"/>
        <dbReference type="ChEBI" id="CHEBI:78442"/>
        <dbReference type="ChEBI" id="CHEBI:78532"/>
        <dbReference type="ChEBI" id="CHEBI:456215"/>
        <dbReference type="EC" id="6.1.1.15"/>
    </reaction>
</comment>
<comment type="subunit">
    <text evidence="1">Homodimer.</text>
</comment>
<comment type="subcellular location">
    <subcellularLocation>
        <location evidence="1">Cytoplasm</location>
    </subcellularLocation>
</comment>
<comment type="domain">
    <text evidence="1">Consists of three domains: the N-terminal catalytic domain, the editing domain and the C-terminal anticodon-binding domain.</text>
</comment>
<comment type="similarity">
    <text evidence="1">Belongs to the class-II aminoacyl-tRNA synthetase family. ProS type 1 subfamily.</text>
</comment>
<feature type="chain" id="PRO_1000199434" description="Proline--tRNA ligase">
    <location>
        <begin position="1"/>
        <end position="570"/>
    </location>
</feature>
<dbReference type="EC" id="6.1.1.15" evidence="1"/>
<dbReference type="EMBL" id="CP000923">
    <property type="protein sequence ID" value="ABY92145.1"/>
    <property type="molecule type" value="Genomic_DNA"/>
</dbReference>
<dbReference type="RefSeq" id="WP_009052843.1">
    <property type="nucleotide sequence ID" value="NC_010320.1"/>
</dbReference>
<dbReference type="SMR" id="B0K5F2"/>
<dbReference type="KEGG" id="tex:Teth514_0842"/>
<dbReference type="HOGENOM" id="CLU_016739_0_0_9"/>
<dbReference type="Proteomes" id="UP000002155">
    <property type="component" value="Chromosome"/>
</dbReference>
<dbReference type="GO" id="GO:0005829">
    <property type="term" value="C:cytosol"/>
    <property type="evidence" value="ECO:0007669"/>
    <property type="project" value="TreeGrafter"/>
</dbReference>
<dbReference type="GO" id="GO:0002161">
    <property type="term" value="F:aminoacyl-tRNA deacylase activity"/>
    <property type="evidence" value="ECO:0007669"/>
    <property type="project" value="InterPro"/>
</dbReference>
<dbReference type="GO" id="GO:0005524">
    <property type="term" value="F:ATP binding"/>
    <property type="evidence" value="ECO:0007669"/>
    <property type="project" value="UniProtKB-UniRule"/>
</dbReference>
<dbReference type="GO" id="GO:0140096">
    <property type="term" value="F:catalytic activity, acting on a protein"/>
    <property type="evidence" value="ECO:0007669"/>
    <property type="project" value="UniProtKB-ARBA"/>
</dbReference>
<dbReference type="GO" id="GO:0004827">
    <property type="term" value="F:proline-tRNA ligase activity"/>
    <property type="evidence" value="ECO:0007669"/>
    <property type="project" value="UniProtKB-UniRule"/>
</dbReference>
<dbReference type="GO" id="GO:0016740">
    <property type="term" value="F:transferase activity"/>
    <property type="evidence" value="ECO:0007669"/>
    <property type="project" value="UniProtKB-ARBA"/>
</dbReference>
<dbReference type="GO" id="GO:0006433">
    <property type="term" value="P:prolyl-tRNA aminoacylation"/>
    <property type="evidence" value="ECO:0007669"/>
    <property type="project" value="UniProtKB-UniRule"/>
</dbReference>
<dbReference type="CDD" id="cd04334">
    <property type="entry name" value="ProRS-INS"/>
    <property type="match status" value="1"/>
</dbReference>
<dbReference type="CDD" id="cd00861">
    <property type="entry name" value="ProRS_anticodon_short"/>
    <property type="match status" value="1"/>
</dbReference>
<dbReference type="CDD" id="cd00779">
    <property type="entry name" value="ProRS_core_prok"/>
    <property type="match status" value="1"/>
</dbReference>
<dbReference type="FunFam" id="3.30.930.10:FF:000065">
    <property type="entry name" value="Proline--tRNA ligase"/>
    <property type="match status" value="1"/>
</dbReference>
<dbReference type="FunFam" id="3.30.930.10:FF:000066">
    <property type="entry name" value="Proline--tRNA ligase"/>
    <property type="match status" value="1"/>
</dbReference>
<dbReference type="FunFam" id="3.40.50.800:FF:000011">
    <property type="entry name" value="Proline--tRNA ligase"/>
    <property type="match status" value="1"/>
</dbReference>
<dbReference type="Gene3D" id="3.40.50.800">
    <property type="entry name" value="Anticodon-binding domain"/>
    <property type="match status" value="1"/>
</dbReference>
<dbReference type="Gene3D" id="3.30.930.10">
    <property type="entry name" value="Bira Bifunctional Protein, Domain 2"/>
    <property type="match status" value="2"/>
</dbReference>
<dbReference type="HAMAP" id="MF_01569">
    <property type="entry name" value="Pro_tRNA_synth_type1"/>
    <property type="match status" value="1"/>
</dbReference>
<dbReference type="InterPro" id="IPR002314">
    <property type="entry name" value="aa-tRNA-synt_IIb"/>
</dbReference>
<dbReference type="InterPro" id="IPR006195">
    <property type="entry name" value="aa-tRNA-synth_II"/>
</dbReference>
<dbReference type="InterPro" id="IPR045864">
    <property type="entry name" value="aa-tRNA-synth_II/BPL/LPL"/>
</dbReference>
<dbReference type="InterPro" id="IPR004154">
    <property type="entry name" value="Anticodon-bd"/>
</dbReference>
<dbReference type="InterPro" id="IPR036621">
    <property type="entry name" value="Anticodon-bd_dom_sf"/>
</dbReference>
<dbReference type="InterPro" id="IPR002316">
    <property type="entry name" value="Pro-tRNA-ligase_IIa"/>
</dbReference>
<dbReference type="InterPro" id="IPR004500">
    <property type="entry name" value="Pro-tRNA-synth_IIa_bac-type"/>
</dbReference>
<dbReference type="InterPro" id="IPR023717">
    <property type="entry name" value="Pro-tRNA-Synthase_IIa_type1"/>
</dbReference>
<dbReference type="InterPro" id="IPR050062">
    <property type="entry name" value="Pro-tRNA_synthetase"/>
</dbReference>
<dbReference type="InterPro" id="IPR044140">
    <property type="entry name" value="ProRS_anticodon_short"/>
</dbReference>
<dbReference type="InterPro" id="IPR033730">
    <property type="entry name" value="ProRS_core_prok"/>
</dbReference>
<dbReference type="InterPro" id="IPR036754">
    <property type="entry name" value="YbaK/aa-tRNA-synt-asso_dom_sf"/>
</dbReference>
<dbReference type="InterPro" id="IPR007214">
    <property type="entry name" value="YbaK/aa-tRNA-synth-assoc-dom"/>
</dbReference>
<dbReference type="NCBIfam" id="NF006625">
    <property type="entry name" value="PRK09194.1"/>
    <property type="match status" value="1"/>
</dbReference>
<dbReference type="NCBIfam" id="TIGR00409">
    <property type="entry name" value="proS_fam_II"/>
    <property type="match status" value="1"/>
</dbReference>
<dbReference type="PANTHER" id="PTHR42753">
    <property type="entry name" value="MITOCHONDRIAL RIBOSOME PROTEIN L39/PROLYL-TRNA LIGASE FAMILY MEMBER"/>
    <property type="match status" value="1"/>
</dbReference>
<dbReference type="PANTHER" id="PTHR42753:SF2">
    <property type="entry name" value="PROLINE--TRNA LIGASE"/>
    <property type="match status" value="1"/>
</dbReference>
<dbReference type="Pfam" id="PF03129">
    <property type="entry name" value="HGTP_anticodon"/>
    <property type="match status" value="1"/>
</dbReference>
<dbReference type="Pfam" id="PF00587">
    <property type="entry name" value="tRNA-synt_2b"/>
    <property type="match status" value="1"/>
</dbReference>
<dbReference type="Pfam" id="PF04073">
    <property type="entry name" value="tRNA_edit"/>
    <property type="match status" value="1"/>
</dbReference>
<dbReference type="PIRSF" id="PIRSF001535">
    <property type="entry name" value="ProRS_1"/>
    <property type="match status" value="1"/>
</dbReference>
<dbReference type="PRINTS" id="PR01046">
    <property type="entry name" value="TRNASYNTHPRO"/>
</dbReference>
<dbReference type="SUPFAM" id="SSF52954">
    <property type="entry name" value="Class II aaRS ABD-related"/>
    <property type="match status" value="1"/>
</dbReference>
<dbReference type="SUPFAM" id="SSF55681">
    <property type="entry name" value="Class II aaRS and biotin synthetases"/>
    <property type="match status" value="1"/>
</dbReference>
<dbReference type="SUPFAM" id="SSF55826">
    <property type="entry name" value="YbaK/ProRS associated domain"/>
    <property type="match status" value="1"/>
</dbReference>
<dbReference type="PROSITE" id="PS50862">
    <property type="entry name" value="AA_TRNA_LIGASE_II"/>
    <property type="match status" value="1"/>
</dbReference>